<comment type="function">
    <text evidence="2 4">Reversibly inhibits the activity of ATP2A1/SERCA1 and ATP2A2/SERCA2 in sarcoplasmic reticulum by decreasing the apparent affinity of the ATPase for Ca(2+). Also inhibits the activity of ATP2A3/SERCA3. Modulates calcium re-uptake during muscle relaxation and plays an important role in calcium homeostasis in muscle. Required for muscle-based, non-shivering thermogenesis (By similarity).</text>
</comment>
<comment type="subunit">
    <text evidence="2 3">Homooligomer. Can also form heterooligomers with other sarcoplasmic/endoplasmic reticulum calcium ATPase (SERCA) regulators ARLN, ERLN, PLN and STRIT1/DWORF. Monomer. Interacts with calcium ATPase ATP2A1/SERCA1. Interacts as a monomer with ATP2A2/SERCA2; the interaction decreases ATP2A2 Ca(2+) affinity. Interacts with VMP1; VMP1 competes with PLN and SLN to prevent them from forming an inhibitory complex with ATP2A2.</text>
</comment>
<comment type="subcellular location">
    <subcellularLocation>
        <location evidence="4">Sarcoplasmic reticulum membrane</location>
        <topology evidence="5">Single-pass membrane protein</topology>
    </subcellularLocation>
    <subcellularLocation>
        <location evidence="3">Endoplasmic reticulum membrane</location>
        <topology evidence="5">Single-pass membrane protein</topology>
    </subcellularLocation>
</comment>
<comment type="similarity">
    <text evidence="6">Belongs to the sarcolipin family.</text>
</comment>
<feature type="peptide" id="PRO_0000045901" description="Sarcolipin">
    <location>
        <begin position="1"/>
        <end position="31"/>
    </location>
</feature>
<feature type="topological domain" description="Cytoplasmic" evidence="1">
    <location>
        <begin position="1"/>
        <end position="7"/>
    </location>
</feature>
<feature type="transmembrane region" description="Helical" evidence="1">
    <location>
        <begin position="8"/>
        <end position="26"/>
    </location>
</feature>
<feature type="topological domain" description="Lumenal" evidence="1">
    <location>
        <begin position="27"/>
        <end position="31"/>
    </location>
</feature>
<keyword id="KW-0256">Endoplasmic reticulum</keyword>
<keyword id="KW-0472">Membrane</keyword>
<keyword id="KW-1185">Reference proteome</keyword>
<keyword id="KW-0703">Sarcoplasmic reticulum</keyword>
<keyword id="KW-0812">Transmembrane</keyword>
<keyword id="KW-1133">Transmembrane helix</keyword>
<name>SARCO_RAT</name>
<gene>
    <name type="primary">Sln</name>
</gene>
<organism>
    <name type="scientific">Rattus norvegicus</name>
    <name type="common">Rat</name>
    <dbReference type="NCBI Taxonomy" id="10116"/>
    <lineage>
        <taxon>Eukaryota</taxon>
        <taxon>Metazoa</taxon>
        <taxon>Chordata</taxon>
        <taxon>Craniata</taxon>
        <taxon>Vertebrata</taxon>
        <taxon>Euteleostomi</taxon>
        <taxon>Mammalia</taxon>
        <taxon>Eutheria</taxon>
        <taxon>Euarchontoglires</taxon>
        <taxon>Glires</taxon>
        <taxon>Rodentia</taxon>
        <taxon>Myomorpha</taxon>
        <taxon>Muroidea</taxon>
        <taxon>Muridae</taxon>
        <taxon>Murinae</taxon>
        <taxon>Rattus</taxon>
    </lineage>
</organism>
<reference key="1">
    <citation type="submission" date="2003-11" db="EMBL/GenBank/DDBJ databases">
        <authorList>
            <person name="Minamisawa S."/>
            <person name="Yokoyama U."/>
            <person name="Sato Y."/>
            <person name="Nakagome M."/>
            <person name="Mouri M."/>
            <person name="Uemura N."/>
            <person name="Hori H."/>
            <person name="Ishikawa Y."/>
        </authorList>
    </citation>
    <scope>NUCLEOTIDE SEQUENCE [MRNA]</scope>
    <source>
        <strain>Wistar</strain>
        <tissue>Heart atrium</tissue>
    </source>
</reference>
<protein>
    <recommendedName>
        <fullName>Sarcolipin</fullName>
    </recommendedName>
</protein>
<evidence type="ECO:0000250" key="1"/>
<evidence type="ECO:0000250" key="2">
    <source>
        <dbReference type="UniProtKB" id="O00631"/>
    </source>
</evidence>
<evidence type="ECO:0000250" key="3">
    <source>
        <dbReference type="UniProtKB" id="P42532"/>
    </source>
</evidence>
<evidence type="ECO:0000250" key="4">
    <source>
        <dbReference type="UniProtKB" id="Q9CQD6"/>
    </source>
</evidence>
<evidence type="ECO:0000255" key="5"/>
<evidence type="ECO:0000305" key="6"/>
<proteinExistence type="inferred from homology"/>
<accession>Q6SLE7</accession>
<dbReference type="EMBL" id="AY456000">
    <property type="protein sequence ID" value="AAR19044.1"/>
    <property type="molecule type" value="mRNA"/>
</dbReference>
<dbReference type="RefSeq" id="NP_001013265.1">
    <property type="nucleotide sequence ID" value="NM_001013247.1"/>
</dbReference>
<dbReference type="RefSeq" id="XP_038937799.1">
    <property type="nucleotide sequence ID" value="XM_039081871.2"/>
</dbReference>
<dbReference type="RefSeq" id="XP_038937800.1">
    <property type="nucleotide sequence ID" value="XM_039081872.2"/>
</dbReference>
<dbReference type="SMR" id="Q6SLE7"/>
<dbReference type="STRING" id="10116.ENSRNOP00000011970"/>
<dbReference type="iPTMnet" id="Q6SLE7"/>
<dbReference type="PhosphoSitePlus" id="Q6SLE7"/>
<dbReference type="PaxDb" id="10116-ENSRNOP00000011970"/>
<dbReference type="Ensembl" id="ENSRNOT00000011974.5">
    <property type="protein sequence ID" value="ENSRNOP00000011970.3"/>
    <property type="gene ID" value="ENSRNOG00000009047.5"/>
</dbReference>
<dbReference type="GeneID" id="367086"/>
<dbReference type="KEGG" id="rno:367086"/>
<dbReference type="UCSC" id="RGD:1305224">
    <property type="organism name" value="rat"/>
</dbReference>
<dbReference type="AGR" id="RGD:1305224"/>
<dbReference type="CTD" id="6588"/>
<dbReference type="RGD" id="1305224">
    <property type="gene designation" value="Sln"/>
</dbReference>
<dbReference type="eggNOG" id="ENOG502TD27">
    <property type="taxonomic scope" value="Eukaryota"/>
</dbReference>
<dbReference type="GeneTree" id="ENSGT01110000267577"/>
<dbReference type="HOGENOM" id="CLU_221275_0_0_1"/>
<dbReference type="InParanoid" id="Q6SLE7"/>
<dbReference type="OrthoDB" id="9735832at2759"/>
<dbReference type="PhylomeDB" id="Q6SLE7"/>
<dbReference type="PRO" id="PR:Q6SLE7"/>
<dbReference type="Proteomes" id="UP000002494">
    <property type="component" value="Chromosome 8"/>
</dbReference>
<dbReference type="Bgee" id="ENSRNOG00000009047">
    <property type="expression patterns" value="Expressed in esophagus and 16 other cell types or tissues"/>
</dbReference>
<dbReference type="GO" id="GO:0005789">
    <property type="term" value="C:endoplasmic reticulum membrane"/>
    <property type="evidence" value="ECO:0000266"/>
    <property type="project" value="RGD"/>
</dbReference>
<dbReference type="GO" id="GO:0016529">
    <property type="term" value="C:sarcoplasmic reticulum"/>
    <property type="evidence" value="ECO:0000250"/>
    <property type="project" value="UniProtKB"/>
</dbReference>
<dbReference type="GO" id="GO:0033017">
    <property type="term" value="C:sarcoplasmic reticulum membrane"/>
    <property type="evidence" value="ECO:0000250"/>
    <property type="project" value="UniProtKB"/>
</dbReference>
<dbReference type="GO" id="GO:0030234">
    <property type="term" value="F:enzyme regulator activity"/>
    <property type="evidence" value="ECO:0007669"/>
    <property type="project" value="InterPro"/>
</dbReference>
<dbReference type="GO" id="GO:1901895">
    <property type="term" value="P:negative regulation of ATPase-coupled calcium transmembrane transporter activity"/>
    <property type="evidence" value="ECO:0000250"/>
    <property type="project" value="UniProtKB"/>
</dbReference>
<dbReference type="GO" id="GO:0120162">
    <property type="term" value="P:positive regulation of cold-induced thermogenesis"/>
    <property type="evidence" value="ECO:0000250"/>
    <property type="project" value="YuBioLab"/>
</dbReference>
<dbReference type="GO" id="GO:1901894">
    <property type="term" value="P:regulation of ATPase-coupled calcium transmembrane transporter activity"/>
    <property type="evidence" value="ECO:0000250"/>
    <property type="project" value="UniProtKB"/>
</dbReference>
<dbReference type="GO" id="GO:0051924">
    <property type="term" value="P:regulation of calcium ion transport"/>
    <property type="evidence" value="ECO:0000250"/>
    <property type="project" value="UniProtKB"/>
</dbReference>
<dbReference type="GO" id="GO:1901077">
    <property type="term" value="P:regulation of relaxation of muscle"/>
    <property type="evidence" value="ECO:0000250"/>
    <property type="project" value="UniProtKB"/>
</dbReference>
<dbReference type="GO" id="GO:0070296">
    <property type="term" value="P:sarcoplasmic reticulum calcium ion transport"/>
    <property type="evidence" value="ECO:0000250"/>
    <property type="project" value="UniProtKB"/>
</dbReference>
<dbReference type="CDD" id="cd20253">
    <property type="entry name" value="Sarcolipin"/>
    <property type="match status" value="1"/>
</dbReference>
<dbReference type="Gene3D" id="1.20.5.510">
    <property type="entry name" value="Single helix bin"/>
    <property type="match status" value="1"/>
</dbReference>
<dbReference type="InterPro" id="IPR008028">
    <property type="entry name" value="Sarcolipin"/>
</dbReference>
<dbReference type="Pfam" id="PF05366">
    <property type="entry name" value="Sarcolipin"/>
    <property type="match status" value="1"/>
</dbReference>
<sequence length="31" mass="3808">MERSTQELFINFTVVLITVLLMWLLVRSYQY</sequence>